<feature type="chain" id="PRO_0000415198" description="Probable peptidoglycan glycosyltransferase FtsW">
    <location>
        <begin position="1"/>
        <end position="388"/>
    </location>
</feature>
<feature type="topological domain" description="Cytoplasmic" evidence="1">
    <location>
        <begin position="1"/>
        <end position="19"/>
    </location>
</feature>
<feature type="transmembrane region" description="Helical" evidence="2">
    <location>
        <begin position="20"/>
        <end position="40"/>
    </location>
</feature>
<feature type="topological domain" description="Periplasmic" evidence="1">
    <location>
        <begin position="41"/>
        <end position="57"/>
    </location>
</feature>
<feature type="transmembrane region" description="Helical" evidence="2">
    <location>
        <begin position="58"/>
        <end position="78"/>
    </location>
</feature>
<feature type="topological domain" description="Cytoplasmic" evidence="1">
    <location>
        <begin position="79"/>
        <end position="85"/>
    </location>
</feature>
<feature type="transmembrane region" description="Helical" evidence="2">
    <location>
        <begin position="86"/>
        <end position="106"/>
    </location>
</feature>
<feature type="topological domain" description="Periplasmic" evidence="1">
    <location>
        <begin position="107"/>
        <end position="117"/>
    </location>
</feature>
<feature type="transmembrane region" description="Helical" evidence="2">
    <location>
        <begin position="118"/>
        <end position="137"/>
    </location>
</feature>
<feature type="topological domain" description="Cytoplasmic" evidence="1">
    <location>
        <begin position="138"/>
        <end position="147"/>
    </location>
</feature>
<feature type="transmembrane region" description="Helical" evidence="2">
    <location>
        <begin position="148"/>
        <end position="168"/>
    </location>
</feature>
<feature type="topological domain" description="Periplasmic" evidence="1">
    <location>
        <begin position="169"/>
        <end position="170"/>
    </location>
</feature>
<feature type="transmembrane region" description="Helical" evidence="2">
    <location>
        <begin position="171"/>
        <end position="191"/>
    </location>
</feature>
<feature type="topological domain" description="Cytoplasmic" evidence="1">
    <location>
        <position position="192"/>
    </location>
</feature>
<feature type="transmembrane region" description="Helical" evidence="2">
    <location>
        <begin position="193"/>
        <end position="213"/>
    </location>
</feature>
<feature type="topological domain" description="Periplasmic" evidence="1">
    <location>
        <begin position="214"/>
        <end position="271"/>
    </location>
</feature>
<feature type="transmembrane region" description="Helical" evidence="2">
    <location>
        <begin position="272"/>
        <end position="292"/>
    </location>
</feature>
<feature type="topological domain" description="Cytoplasmic" evidence="1">
    <location>
        <begin position="293"/>
        <end position="315"/>
    </location>
</feature>
<feature type="transmembrane region" description="Helical" evidence="2">
    <location>
        <begin position="316"/>
        <end position="336"/>
    </location>
</feature>
<feature type="topological domain" description="Periplasmic" evidence="1">
    <location>
        <begin position="337"/>
        <end position="348"/>
    </location>
</feature>
<feature type="transmembrane region" description="Helical" evidence="2">
    <location>
        <begin position="349"/>
        <end position="369"/>
    </location>
</feature>
<feature type="topological domain" description="Cytoplasmic" evidence="1">
    <location>
        <begin position="370"/>
        <end position="388"/>
    </location>
</feature>
<dbReference type="EC" id="2.4.99.28" evidence="2"/>
<dbReference type="EMBL" id="CP002738">
    <property type="protein sequence ID" value="AEF98709.1"/>
    <property type="molecule type" value="Genomic_DNA"/>
</dbReference>
<dbReference type="RefSeq" id="WP_013816982.1">
    <property type="nucleotide sequence ID" value="NC_015572.1"/>
</dbReference>
<dbReference type="SMR" id="F9ZZQ0"/>
<dbReference type="STRING" id="857087.Metme_0260"/>
<dbReference type="KEGG" id="mmt:Metme_0260"/>
<dbReference type="eggNOG" id="COG0772">
    <property type="taxonomic scope" value="Bacteria"/>
</dbReference>
<dbReference type="HOGENOM" id="CLU_029243_1_1_6"/>
<dbReference type="OrthoDB" id="9768187at2"/>
<dbReference type="UniPathway" id="UPA00219"/>
<dbReference type="Proteomes" id="UP000008888">
    <property type="component" value="Chromosome"/>
</dbReference>
<dbReference type="GO" id="GO:0032153">
    <property type="term" value="C:cell division site"/>
    <property type="evidence" value="ECO:0007669"/>
    <property type="project" value="UniProtKB-UniRule"/>
</dbReference>
<dbReference type="GO" id="GO:0005886">
    <property type="term" value="C:plasma membrane"/>
    <property type="evidence" value="ECO:0007669"/>
    <property type="project" value="UniProtKB-SubCell"/>
</dbReference>
<dbReference type="GO" id="GO:0015648">
    <property type="term" value="F:lipid-linked peptidoglycan transporter activity"/>
    <property type="evidence" value="ECO:0007669"/>
    <property type="project" value="TreeGrafter"/>
</dbReference>
<dbReference type="GO" id="GO:0008955">
    <property type="term" value="F:peptidoglycan glycosyltransferase activity"/>
    <property type="evidence" value="ECO:0007669"/>
    <property type="project" value="UniProtKB-UniRule"/>
</dbReference>
<dbReference type="GO" id="GO:0071555">
    <property type="term" value="P:cell wall organization"/>
    <property type="evidence" value="ECO:0007669"/>
    <property type="project" value="UniProtKB-KW"/>
</dbReference>
<dbReference type="GO" id="GO:0043093">
    <property type="term" value="P:FtsZ-dependent cytokinesis"/>
    <property type="evidence" value="ECO:0007669"/>
    <property type="project" value="UniProtKB-UniRule"/>
</dbReference>
<dbReference type="GO" id="GO:0009252">
    <property type="term" value="P:peptidoglycan biosynthetic process"/>
    <property type="evidence" value="ECO:0007669"/>
    <property type="project" value="UniProtKB-UniRule"/>
</dbReference>
<dbReference type="GO" id="GO:0008360">
    <property type="term" value="P:regulation of cell shape"/>
    <property type="evidence" value="ECO:0007669"/>
    <property type="project" value="UniProtKB-KW"/>
</dbReference>
<dbReference type="HAMAP" id="MF_00913">
    <property type="entry name" value="PGT_FtsW_proteobact"/>
    <property type="match status" value="1"/>
</dbReference>
<dbReference type="InterPro" id="IPR013437">
    <property type="entry name" value="FtsW"/>
</dbReference>
<dbReference type="InterPro" id="IPR001182">
    <property type="entry name" value="FtsW/RodA"/>
</dbReference>
<dbReference type="NCBIfam" id="TIGR02614">
    <property type="entry name" value="ftsW"/>
    <property type="match status" value="1"/>
</dbReference>
<dbReference type="PANTHER" id="PTHR30474">
    <property type="entry name" value="CELL CYCLE PROTEIN"/>
    <property type="match status" value="1"/>
</dbReference>
<dbReference type="PANTHER" id="PTHR30474:SF2">
    <property type="entry name" value="PEPTIDOGLYCAN GLYCOSYLTRANSFERASE FTSW-RELATED"/>
    <property type="match status" value="1"/>
</dbReference>
<dbReference type="Pfam" id="PF01098">
    <property type="entry name" value="FTSW_RODA_SPOVE"/>
    <property type="match status" value="1"/>
</dbReference>
<proteinExistence type="inferred from homology"/>
<protein>
    <recommendedName>
        <fullName evidence="2">Probable peptidoglycan glycosyltransferase FtsW</fullName>
        <shortName evidence="2">PGT</shortName>
        <ecNumber evidence="2">2.4.99.28</ecNumber>
    </recommendedName>
    <alternativeName>
        <fullName evidence="2">Cell division protein FtsW</fullName>
    </alternativeName>
    <alternativeName>
        <fullName evidence="2">Cell wall polymerase</fullName>
    </alternativeName>
    <alternativeName>
        <fullName evidence="2">Peptidoglycan polymerase</fullName>
        <shortName evidence="2">PG polymerase</shortName>
    </alternativeName>
</protein>
<name>FTSW_METMM</name>
<gene>
    <name evidence="2" type="primary">ftsW</name>
    <name type="ordered locus">Metme_0260</name>
</gene>
<comment type="function">
    <text evidence="2">Peptidoglycan polymerase that is essential for cell division.</text>
</comment>
<comment type="catalytic activity">
    <reaction evidence="2">
        <text>[GlcNAc-(1-&gt;4)-Mur2Ac(oyl-L-Ala-gamma-D-Glu-L-Lys-D-Ala-D-Ala)](n)-di-trans,octa-cis-undecaprenyl diphosphate + beta-D-GlcNAc-(1-&gt;4)-Mur2Ac(oyl-L-Ala-gamma-D-Glu-L-Lys-D-Ala-D-Ala)-di-trans,octa-cis-undecaprenyl diphosphate = [GlcNAc-(1-&gt;4)-Mur2Ac(oyl-L-Ala-gamma-D-Glu-L-Lys-D-Ala-D-Ala)](n+1)-di-trans,octa-cis-undecaprenyl diphosphate + di-trans,octa-cis-undecaprenyl diphosphate + H(+)</text>
        <dbReference type="Rhea" id="RHEA:23708"/>
        <dbReference type="Rhea" id="RHEA-COMP:9602"/>
        <dbReference type="Rhea" id="RHEA-COMP:9603"/>
        <dbReference type="ChEBI" id="CHEBI:15378"/>
        <dbReference type="ChEBI" id="CHEBI:58405"/>
        <dbReference type="ChEBI" id="CHEBI:60033"/>
        <dbReference type="ChEBI" id="CHEBI:78435"/>
        <dbReference type="EC" id="2.4.99.28"/>
    </reaction>
</comment>
<comment type="pathway">
    <text evidence="2">Cell wall biogenesis; peptidoglycan biosynthesis.</text>
</comment>
<comment type="subcellular location">
    <subcellularLocation>
        <location evidence="2">Cell inner membrane</location>
        <topology evidence="2">Multi-pass membrane protein</topology>
    </subcellularLocation>
    <text evidence="2">Localizes to the division septum.</text>
</comment>
<comment type="similarity">
    <text evidence="2">Belongs to the SEDS family. FtsW subfamily.</text>
</comment>
<reference key="1">
    <citation type="submission" date="2011-05" db="EMBL/GenBank/DDBJ databases">
        <title>Complete sequence of Methylomonas methanica MC09.</title>
        <authorList>
            <person name="Lucas S."/>
            <person name="Han J."/>
            <person name="Lapidus A."/>
            <person name="Cheng J.-F."/>
            <person name="Goodwin L."/>
            <person name="Pitluck S."/>
            <person name="Peters L."/>
            <person name="Mikhailova N."/>
            <person name="Teshima H."/>
            <person name="Han C."/>
            <person name="Tapia R."/>
            <person name="Land M."/>
            <person name="Hauser L."/>
            <person name="Kyrpides N."/>
            <person name="Ivanova N."/>
            <person name="Pagani I."/>
            <person name="Stein L."/>
            <person name="Woyke T."/>
        </authorList>
    </citation>
    <scope>NUCLEOTIDE SEQUENCE [LARGE SCALE GENOMIC DNA]</scope>
    <source>
        <strain>DSM 25384 / MC09</strain>
    </source>
</reference>
<evidence type="ECO:0000255" key="1"/>
<evidence type="ECO:0000255" key="2">
    <source>
        <dbReference type="HAMAP-Rule" id="MF_00913"/>
    </source>
</evidence>
<keyword id="KW-0131">Cell cycle</keyword>
<keyword id="KW-0132">Cell division</keyword>
<keyword id="KW-0997">Cell inner membrane</keyword>
<keyword id="KW-1003">Cell membrane</keyword>
<keyword id="KW-0133">Cell shape</keyword>
<keyword id="KW-0961">Cell wall biogenesis/degradation</keyword>
<keyword id="KW-0328">Glycosyltransferase</keyword>
<keyword id="KW-0472">Membrane</keyword>
<keyword id="KW-0573">Peptidoglycan synthesis</keyword>
<keyword id="KW-1185">Reference proteome</keyword>
<keyword id="KW-0808">Transferase</keyword>
<keyword id="KW-0812">Transmembrane</keyword>
<keyword id="KW-1133">Transmembrane helix</keyword>
<organism>
    <name type="scientific">Methylomonas methanica (strain DSM 25384 / MC09)</name>
    <dbReference type="NCBI Taxonomy" id="857087"/>
    <lineage>
        <taxon>Bacteria</taxon>
        <taxon>Pseudomonadati</taxon>
        <taxon>Pseudomonadota</taxon>
        <taxon>Gammaproteobacteria</taxon>
        <taxon>Methylococcales</taxon>
        <taxon>Methylococcaceae</taxon>
        <taxon>Methylomonas</taxon>
    </lineage>
</organism>
<accession>F9ZZQ0</accession>
<sequence>MSAAAPKPRPAHRFHIDQTLLSVCLCLLGIGFVMVASSSMHLGVKMADDVSYYPFKQLVHIILGLMFAAAILAIPMKYWQKIGQPLFIVGLVLLLVVLIPGVGVKVNGSTRWLSLLGLRIQVSEVMKFISVVYMAGYITRHSDHVRHSIFGLLRPLMLLSVASILLLLEPDFGSAVVILIIAMGMMFLGGARLSPFVALVALISSAGAILASSADYRVKRMTSFLNPWEHARDSGYQLTQALISFGRGEVSGVGLGNGLQKLFYLPEAHTDFLFSVLGEELGLVGVTLVIALFTTLVVRGFSIGEQAEAAGERFSALVAYGLVIWFGFQAFVNMGVNMGILPTKGLTLPLMSYGGGSMIVMCGAMAVLFRIHYEVTELHKSNIKGKSR</sequence>